<proteinExistence type="inferred from homology"/>
<feature type="chain" id="PRO_0000284228" description="Endoribonuclease YbeY">
    <location>
        <begin position="1"/>
        <end position="158"/>
    </location>
</feature>
<feature type="binding site" evidence="1">
    <location>
        <position position="124"/>
    </location>
    <ligand>
        <name>Zn(2+)</name>
        <dbReference type="ChEBI" id="CHEBI:29105"/>
        <note>catalytic</note>
    </ligand>
</feature>
<feature type="binding site" evidence="1">
    <location>
        <position position="128"/>
    </location>
    <ligand>
        <name>Zn(2+)</name>
        <dbReference type="ChEBI" id="CHEBI:29105"/>
        <note>catalytic</note>
    </ligand>
</feature>
<feature type="binding site" evidence="1">
    <location>
        <position position="134"/>
    </location>
    <ligand>
        <name>Zn(2+)</name>
        <dbReference type="ChEBI" id="CHEBI:29105"/>
        <note>catalytic</note>
    </ligand>
</feature>
<name>YBEY_LATSS</name>
<sequence>MDIQIIDETKIVPEAQIKLVEDVLEFAGQKLELAEDTEMSVTFVTNERIRQINQEYRNTDRATDVISFAIEEDPEEEGLPANFEELFDIPKNIGDLFVSLEKAAEQAETYGHSFERELGYTMVHGFLHLNGYDHIHTEDEVKMIPLQETILDEFGLKR</sequence>
<gene>
    <name evidence="1" type="primary">ybeY</name>
    <name type="ordered locus">LCA_0876</name>
</gene>
<evidence type="ECO:0000255" key="1">
    <source>
        <dbReference type="HAMAP-Rule" id="MF_00009"/>
    </source>
</evidence>
<protein>
    <recommendedName>
        <fullName evidence="1">Endoribonuclease YbeY</fullName>
        <ecNumber evidence="1">3.1.-.-</ecNumber>
    </recommendedName>
</protein>
<keyword id="KW-0963">Cytoplasm</keyword>
<keyword id="KW-0255">Endonuclease</keyword>
<keyword id="KW-0378">Hydrolase</keyword>
<keyword id="KW-0479">Metal-binding</keyword>
<keyword id="KW-0540">Nuclease</keyword>
<keyword id="KW-1185">Reference proteome</keyword>
<keyword id="KW-0690">Ribosome biogenesis</keyword>
<keyword id="KW-0698">rRNA processing</keyword>
<keyword id="KW-0862">Zinc</keyword>
<accession>Q38XA4</accession>
<reference key="1">
    <citation type="journal article" date="2005" name="Nat. Biotechnol.">
        <title>The complete genome sequence of the meat-borne lactic acid bacterium Lactobacillus sakei 23K.</title>
        <authorList>
            <person name="Chaillou S."/>
            <person name="Champomier-Verges M.-C."/>
            <person name="Cornet M."/>
            <person name="Crutz-Le Coq A.-M."/>
            <person name="Dudez A.-M."/>
            <person name="Martin V."/>
            <person name="Beaufils S."/>
            <person name="Darbon-Rongere E."/>
            <person name="Bossy R."/>
            <person name="Loux V."/>
            <person name="Zagorec M."/>
        </authorList>
    </citation>
    <scope>NUCLEOTIDE SEQUENCE [LARGE SCALE GENOMIC DNA]</scope>
    <source>
        <strain>23K</strain>
    </source>
</reference>
<comment type="function">
    <text evidence="1">Single strand-specific metallo-endoribonuclease involved in late-stage 70S ribosome quality control and in maturation of the 3' terminus of the 16S rRNA.</text>
</comment>
<comment type="cofactor">
    <cofactor evidence="1">
        <name>Zn(2+)</name>
        <dbReference type="ChEBI" id="CHEBI:29105"/>
    </cofactor>
    <text evidence="1">Binds 1 zinc ion.</text>
</comment>
<comment type="subcellular location">
    <subcellularLocation>
        <location evidence="1">Cytoplasm</location>
    </subcellularLocation>
</comment>
<comment type="similarity">
    <text evidence="1">Belongs to the endoribonuclease YbeY family.</text>
</comment>
<dbReference type="EC" id="3.1.-.-" evidence="1"/>
<dbReference type="EMBL" id="CR936503">
    <property type="protein sequence ID" value="CAI55177.1"/>
    <property type="molecule type" value="Genomic_DNA"/>
</dbReference>
<dbReference type="RefSeq" id="WP_011374578.1">
    <property type="nucleotide sequence ID" value="NC_007576.1"/>
</dbReference>
<dbReference type="SMR" id="Q38XA4"/>
<dbReference type="STRING" id="314315.LCA_0876"/>
<dbReference type="GeneID" id="57133733"/>
<dbReference type="KEGG" id="lsa:LCA_0876"/>
<dbReference type="eggNOG" id="COG0319">
    <property type="taxonomic scope" value="Bacteria"/>
</dbReference>
<dbReference type="HOGENOM" id="CLU_106710_3_0_9"/>
<dbReference type="OrthoDB" id="9807740at2"/>
<dbReference type="Proteomes" id="UP000002707">
    <property type="component" value="Chromosome"/>
</dbReference>
<dbReference type="GO" id="GO:0005737">
    <property type="term" value="C:cytoplasm"/>
    <property type="evidence" value="ECO:0007669"/>
    <property type="project" value="UniProtKB-SubCell"/>
</dbReference>
<dbReference type="GO" id="GO:0004222">
    <property type="term" value="F:metalloendopeptidase activity"/>
    <property type="evidence" value="ECO:0007669"/>
    <property type="project" value="InterPro"/>
</dbReference>
<dbReference type="GO" id="GO:0004521">
    <property type="term" value="F:RNA endonuclease activity"/>
    <property type="evidence" value="ECO:0007669"/>
    <property type="project" value="UniProtKB-UniRule"/>
</dbReference>
<dbReference type="GO" id="GO:0008270">
    <property type="term" value="F:zinc ion binding"/>
    <property type="evidence" value="ECO:0007669"/>
    <property type="project" value="UniProtKB-UniRule"/>
</dbReference>
<dbReference type="GO" id="GO:0006364">
    <property type="term" value="P:rRNA processing"/>
    <property type="evidence" value="ECO:0007669"/>
    <property type="project" value="UniProtKB-UniRule"/>
</dbReference>
<dbReference type="Gene3D" id="3.40.390.30">
    <property type="entry name" value="Metalloproteases ('zincins'), catalytic domain"/>
    <property type="match status" value="1"/>
</dbReference>
<dbReference type="HAMAP" id="MF_00009">
    <property type="entry name" value="Endoribonucl_YbeY"/>
    <property type="match status" value="1"/>
</dbReference>
<dbReference type="InterPro" id="IPR023091">
    <property type="entry name" value="MetalPrtase_cat_dom_sf_prd"/>
</dbReference>
<dbReference type="InterPro" id="IPR002036">
    <property type="entry name" value="YbeY"/>
</dbReference>
<dbReference type="InterPro" id="IPR020549">
    <property type="entry name" value="YbeY_CS"/>
</dbReference>
<dbReference type="NCBIfam" id="TIGR00043">
    <property type="entry name" value="rRNA maturation RNase YbeY"/>
    <property type="match status" value="1"/>
</dbReference>
<dbReference type="PANTHER" id="PTHR46986">
    <property type="entry name" value="ENDORIBONUCLEASE YBEY, CHLOROPLASTIC"/>
    <property type="match status" value="1"/>
</dbReference>
<dbReference type="PANTHER" id="PTHR46986:SF1">
    <property type="entry name" value="ENDORIBONUCLEASE YBEY, CHLOROPLASTIC"/>
    <property type="match status" value="1"/>
</dbReference>
<dbReference type="Pfam" id="PF02130">
    <property type="entry name" value="YbeY"/>
    <property type="match status" value="1"/>
</dbReference>
<dbReference type="SUPFAM" id="SSF55486">
    <property type="entry name" value="Metalloproteases ('zincins'), catalytic domain"/>
    <property type="match status" value="1"/>
</dbReference>
<dbReference type="PROSITE" id="PS01306">
    <property type="entry name" value="UPF0054"/>
    <property type="match status" value="1"/>
</dbReference>
<organism>
    <name type="scientific">Latilactobacillus sakei subsp. sakei (strain 23K)</name>
    <name type="common">Lactobacillus sakei subsp. sakei</name>
    <dbReference type="NCBI Taxonomy" id="314315"/>
    <lineage>
        <taxon>Bacteria</taxon>
        <taxon>Bacillati</taxon>
        <taxon>Bacillota</taxon>
        <taxon>Bacilli</taxon>
        <taxon>Lactobacillales</taxon>
        <taxon>Lactobacillaceae</taxon>
        <taxon>Latilactobacillus</taxon>
    </lineage>
</organism>